<name>PRMA_SHEB9</name>
<comment type="function">
    <text evidence="1">Methylates ribosomal protein L11.</text>
</comment>
<comment type="catalytic activity">
    <reaction evidence="1">
        <text>L-lysyl-[protein] + 3 S-adenosyl-L-methionine = N(6),N(6),N(6)-trimethyl-L-lysyl-[protein] + 3 S-adenosyl-L-homocysteine + 3 H(+)</text>
        <dbReference type="Rhea" id="RHEA:54192"/>
        <dbReference type="Rhea" id="RHEA-COMP:9752"/>
        <dbReference type="Rhea" id="RHEA-COMP:13826"/>
        <dbReference type="ChEBI" id="CHEBI:15378"/>
        <dbReference type="ChEBI" id="CHEBI:29969"/>
        <dbReference type="ChEBI" id="CHEBI:57856"/>
        <dbReference type="ChEBI" id="CHEBI:59789"/>
        <dbReference type="ChEBI" id="CHEBI:61961"/>
    </reaction>
</comment>
<comment type="subcellular location">
    <subcellularLocation>
        <location evidence="1">Cytoplasm</location>
    </subcellularLocation>
</comment>
<comment type="similarity">
    <text evidence="1">Belongs to the methyltransferase superfamily. PrmA family.</text>
</comment>
<feature type="chain" id="PRO_1000083359" description="Ribosomal protein L11 methyltransferase">
    <location>
        <begin position="1"/>
        <end position="293"/>
    </location>
</feature>
<feature type="binding site" evidence="1">
    <location>
        <position position="145"/>
    </location>
    <ligand>
        <name>S-adenosyl-L-methionine</name>
        <dbReference type="ChEBI" id="CHEBI:59789"/>
    </ligand>
</feature>
<feature type="binding site" evidence="1">
    <location>
        <position position="166"/>
    </location>
    <ligand>
        <name>S-adenosyl-L-methionine</name>
        <dbReference type="ChEBI" id="CHEBI:59789"/>
    </ligand>
</feature>
<feature type="binding site" evidence="1">
    <location>
        <position position="188"/>
    </location>
    <ligand>
        <name>S-adenosyl-L-methionine</name>
        <dbReference type="ChEBI" id="CHEBI:59789"/>
    </ligand>
</feature>
<feature type="binding site" evidence="1">
    <location>
        <position position="230"/>
    </location>
    <ligand>
        <name>S-adenosyl-L-methionine</name>
        <dbReference type="ChEBI" id="CHEBI:59789"/>
    </ligand>
</feature>
<gene>
    <name evidence="1" type="primary">prmA</name>
    <name type="ordered locus">Sbal195_4079</name>
</gene>
<accession>A9L5E5</accession>
<organism>
    <name type="scientific">Shewanella baltica (strain OS195)</name>
    <dbReference type="NCBI Taxonomy" id="399599"/>
    <lineage>
        <taxon>Bacteria</taxon>
        <taxon>Pseudomonadati</taxon>
        <taxon>Pseudomonadota</taxon>
        <taxon>Gammaproteobacteria</taxon>
        <taxon>Alteromonadales</taxon>
        <taxon>Shewanellaceae</taxon>
        <taxon>Shewanella</taxon>
    </lineage>
</organism>
<protein>
    <recommendedName>
        <fullName evidence="1">Ribosomal protein L11 methyltransferase</fullName>
        <shortName evidence="1">L11 Mtase</shortName>
        <ecNumber evidence="1">2.1.1.-</ecNumber>
    </recommendedName>
</protein>
<keyword id="KW-0963">Cytoplasm</keyword>
<keyword id="KW-0489">Methyltransferase</keyword>
<keyword id="KW-0949">S-adenosyl-L-methionine</keyword>
<keyword id="KW-0808">Transferase</keyword>
<proteinExistence type="inferred from homology"/>
<dbReference type="EC" id="2.1.1.-" evidence="1"/>
<dbReference type="EMBL" id="CP000891">
    <property type="protein sequence ID" value="ABX51239.1"/>
    <property type="molecule type" value="Genomic_DNA"/>
</dbReference>
<dbReference type="RefSeq" id="WP_012197708.1">
    <property type="nucleotide sequence ID" value="NC_009997.1"/>
</dbReference>
<dbReference type="SMR" id="A9L5E5"/>
<dbReference type="GeneID" id="11775011"/>
<dbReference type="KEGG" id="sbn:Sbal195_4079"/>
<dbReference type="HOGENOM" id="CLU_049382_4_1_6"/>
<dbReference type="Proteomes" id="UP000000770">
    <property type="component" value="Chromosome"/>
</dbReference>
<dbReference type="GO" id="GO:0005829">
    <property type="term" value="C:cytosol"/>
    <property type="evidence" value="ECO:0007669"/>
    <property type="project" value="TreeGrafter"/>
</dbReference>
<dbReference type="GO" id="GO:0016279">
    <property type="term" value="F:protein-lysine N-methyltransferase activity"/>
    <property type="evidence" value="ECO:0007669"/>
    <property type="project" value="TreeGrafter"/>
</dbReference>
<dbReference type="GO" id="GO:0032259">
    <property type="term" value="P:methylation"/>
    <property type="evidence" value="ECO:0007669"/>
    <property type="project" value="UniProtKB-KW"/>
</dbReference>
<dbReference type="CDD" id="cd02440">
    <property type="entry name" value="AdoMet_MTases"/>
    <property type="match status" value="1"/>
</dbReference>
<dbReference type="Gene3D" id="3.40.50.150">
    <property type="entry name" value="Vaccinia Virus protein VP39"/>
    <property type="match status" value="1"/>
</dbReference>
<dbReference type="HAMAP" id="MF_00735">
    <property type="entry name" value="Methyltr_PrmA"/>
    <property type="match status" value="1"/>
</dbReference>
<dbReference type="InterPro" id="IPR050078">
    <property type="entry name" value="Ribosomal_L11_MeTrfase_PrmA"/>
</dbReference>
<dbReference type="InterPro" id="IPR004498">
    <property type="entry name" value="Ribosomal_PrmA_MeTrfase"/>
</dbReference>
<dbReference type="InterPro" id="IPR029063">
    <property type="entry name" value="SAM-dependent_MTases_sf"/>
</dbReference>
<dbReference type="NCBIfam" id="TIGR00406">
    <property type="entry name" value="prmA"/>
    <property type="match status" value="1"/>
</dbReference>
<dbReference type="PANTHER" id="PTHR43648">
    <property type="entry name" value="ELECTRON TRANSFER FLAVOPROTEIN BETA SUBUNIT LYSINE METHYLTRANSFERASE"/>
    <property type="match status" value="1"/>
</dbReference>
<dbReference type="PANTHER" id="PTHR43648:SF1">
    <property type="entry name" value="ELECTRON TRANSFER FLAVOPROTEIN BETA SUBUNIT LYSINE METHYLTRANSFERASE"/>
    <property type="match status" value="1"/>
</dbReference>
<dbReference type="Pfam" id="PF06325">
    <property type="entry name" value="PrmA"/>
    <property type="match status" value="1"/>
</dbReference>
<dbReference type="PIRSF" id="PIRSF000401">
    <property type="entry name" value="RPL11_MTase"/>
    <property type="match status" value="1"/>
</dbReference>
<dbReference type="SUPFAM" id="SSF53335">
    <property type="entry name" value="S-adenosyl-L-methionine-dependent methyltransferases"/>
    <property type="match status" value="1"/>
</dbReference>
<evidence type="ECO:0000255" key="1">
    <source>
        <dbReference type="HAMAP-Rule" id="MF_00735"/>
    </source>
</evidence>
<sequence>MPWIQLRINTNSDDAETISDLLMEEGSVSITFEDGKDTPIFEPKLGETPLWRDTVVVALFDAETDLTPTIAMLKTLPFLGENFSHKVEQIEDKDWVREWMDNFHPIQFGTRLWICPSWREIPDPTAVNVILDPGLAFGTGTHPTTALCLEWLDSLDLSDEEVIDFGCGSGILAVAALKLGAKNVTGIDIDYQAIDASRANAERNDVADKLALYLPEDQPADLKADVLVANILAGPLRELAPLIAERVKTSGKLALSGLLKEQAQEISDFYSQWFDMDAAAHKEDWSRLTGKRK</sequence>
<reference key="1">
    <citation type="submission" date="2007-11" db="EMBL/GenBank/DDBJ databases">
        <title>Complete sequence of chromosome of Shewanella baltica OS195.</title>
        <authorList>
            <consortium name="US DOE Joint Genome Institute"/>
            <person name="Copeland A."/>
            <person name="Lucas S."/>
            <person name="Lapidus A."/>
            <person name="Barry K."/>
            <person name="Glavina del Rio T."/>
            <person name="Dalin E."/>
            <person name="Tice H."/>
            <person name="Pitluck S."/>
            <person name="Chain P."/>
            <person name="Malfatti S."/>
            <person name="Shin M."/>
            <person name="Vergez L."/>
            <person name="Schmutz J."/>
            <person name="Larimer F."/>
            <person name="Land M."/>
            <person name="Hauser L."/>
            <person name="Kyrpides N."/>
            <person name="Kim E."/>
            <person name="Brettar I."/>
            <person name="Rodrigues J."/>
            <person name="Konstantinidis K."/>
            <person name="Klappenbach J."/>
            <person name="Hofle M."/>
            <person name="Tiedje J."/>
            <person name="Richardson P."/>
        </authorList>
    </citation>
    <scope>NUCLEOTIDE SEQUENCE [LARGE SCALE GENOMIC DNA]</scope>
    <source>
        <strain>OS195</strain>
    </source>
</reference>